<proteinExistence type="inferred from homology"/>
<organism>
    <name type="scientific">Escherichia coli (strain SE11)</name>
    <dbReference type="NCBI Taxonomy" id="409438"/>
    <lineage>
        <taxon>Bacteria</taxon>
        <taxon>Pseudomonadati</taxon>
        <taxon>Pseudomonadota</taxon>
        <taxon>Gammaproteobacteria</taxon>
        <taxon>Enterobacterales</taxon>
        <taxon>Enterobacteriaceae</taxon>
        <taxon>Escherichia</taxon>
    </lineage>
</organism>
<sequence length="217" mass="23353">MNQTLLSSFGTPFERVENALAALREGRGVMVLDDEDRENEGDMIFPAETMTVEQMALTIRHGSGIVCLCITEDRRKQLDLPMMVENNTSAYGTGFTVTIEAAEGVTTGVSAADRITTVRAAIADGAKPSDLNRPGHVFPLRAQAGGVLTRGGHTEATIDLMTLAGFKPAGVLCELTNDDGTMARAPECIEFANKHNMALVTIEDLVAYRQAHERKAS</sequence>
<reference key="1">
    <citation type="journal article" date="2008" name="DNA Res.">
        <title>Complete genome sequence and comparative analysis of the wild-type commensal Escherichia coli strain SE11 isolated from a healthy adult.</title>
        <authorList>
            <person name="Oshima K."/>
            <person name="Toh H."/>
            <person name="Ogura Y."/>
            <person name="Sasamoto H."/>
            <person name="Morita H."/>
            <person name="Park S.-H."/>
            <person name="Ooka T."/>
            <person name="Iyoda S."/>
            <person name="Taylor T.D."/>
            <person name="Hayashi T."/>
            <person name="Itoh K."/>
            <person name="Hattori M."/>
        </authorList>
    </citation>
    <scope>NUCLEOTIDE SEQUENCE [LARGE SCALE GENOMIC DNA]</scope>
    <source>
        <strain>SE11</strain>
    </source>
</reference>
<keyword id="KW-0456">Lyase</keyword>
<keyword id="KW-0460">Magnesium</keyword>
<keyword id="KW-0464">Manganese</keyword>
<keyword id="KW-0479">Metal-binding</keyword>
<keyword id="KW-0686">Riboflavin biosynthesis</keyword>
<comment type="function">
    <text evidence="1">Catalyzes the conversion of D-ribulose 5-phosphate to formate and 3,4-dihydroxy-2-butanone 4-phosphate.</text>
</comment>
<comment type="catalytic activity">
    <reaction evidence="1">
        <text>D-ribulose 5-phosphate = (2S)-2-hydroxy-3-oxobutyl phosphate + formate + H(+)</text>
        <dbReference type="Rhea" id="RHEA:18457"/>
        <dbReference type="ChEBI" id="CHEBI:15378"/>
        <dbReference type="ChEBI" id="CHEBI:15740"/>
        <dbReference type="ChEBI" id="CHEBI:58121"/>
        <dbReference type="ChEBI" id="CHEBI:58830"/>
        <dbReference type="EC" id="4.1.99.12"/>
    </reaction>
</comment>
<comment type="cofactor">
    <cofactor evidence="1">
        <name>Mg(2+)</name>
        <dbReference type="ChEBI" id="CHEBI:18420"/>
    </cofactor>
    <cofactor evidence="1">
        <name>Mn(2+)</name>
        <dbReference type="ChEBI" id="CHEBI:29035"/>
    </cofactor>
    <text evidence="1">Binds 2 divalent metal cations per subunit. Magnesium or manganese.</text>
</comment>
<comment type="pathway">
    <text evidence="1">Cofactor biosynthesis; riboflavin biosynthesis; 2-hydroxy-3-oxobutyl phosphate from D-ribulose 5-phosphate: step 1/1.</text>
</comment>
<comment type="subunit">
    <text evidence="1">Homodimer.</text>
</comment>
<comment type="similarity">
    <text evidence="1">Belongs to the DHBP synthase family.</text>
</comment>
<dbReference type="EC" id="4.1.99.12" evidence="1"/>
<dbReference type="EMBL" id="AP009240">
    <property type="protein sequence ID" value="BAG78846.1"/>
    <property type="molecule type" value="Genomic_DNA"/>
</dbReference>
<dbReference type="RefSeq" id="WP_001076997.1">
    <property type="nucleotide sequence ID" value="NC_011415.1"/>
</dbReference>
<dbReference type="SMR" id="B6I413"/>
<dbReference type="GeneID" id="93778953"/>
<dbReference type="KEGG" id="ecy:ECSE_3322"/>
<dbReference type="HOGENOM" id="CLU_020273_3_0_6"/>
<dbReference type="UniPathway" id="UPA00275">
    <property type="reaction ID" value="UER00399"/>
</dbReference>
<dbReference type="Proteomes" id="UP000008199">
    <property type="component" value="Chromosome"/>
</dbReference>
<dbReference type="GO" id="GO:0005829">
    <property type="term" value="C:cytosol"/>
    <property type="evidence" value="ECO:0007669"/>
    <property type="project" value="TreeGrafter"/>
</dbReference>
<dbReference type="GO" id="GO:0008686">
    <property type="term" value="F:3,4-dihydroxy-2-butanone-4-phosphate synthase activity"/>
    <property type="evidence" value="ECO:0007669"/>
    <property type="project" value="UniProtKB-UniRule"/>
</dbReference>
<dbReference type="GO" id="GO:0000287">
    <property type="term" value="F:magnesium ion binding"/>
    <property type="evidence" value="ECO:0007669"/>
    <property type="project" value="UniProtKB-UniRule"/>
</dbReference>
<dbReference type="GO" id="GO:0030145">
    <property type="term" value="F:manganese ion binding"/>
    <property type="evidence" value="ECO:0007669"/>
    <property type="project" value="UniProtKB-UniRule"/>
</dbReference>
<dbReference type="GO" id="GO:0009231">
    <property type="term" value="P:riboflavin biosynthetic process"/>
    <property type="evidence" value="ECO:0007669"/>
    <property type="project" value="UniProtKB-UniRule"/>
</dbReference>
<dbReference type="FunFam" id="3.90.870.10:FF:000002">
    <property type="entry name" value="3,4-dihydroxy-2-butanone 4-phosphate synthase"/>
    <property type="match status" value="1"/>
</dbReference>
<dbReference type="Gene3D" id="3.90.870.10">
    <property type="entry name" value="DHBP synthase"/>
    <property type="match status" value="1"/>
</dbReference>
<dbReference type="HAMAP" id="MF_00180">
    <property type="entry name" value="RibB"/>
    <property type="match status" value="1"/>
</dbReference>
<dbReference type="InterPro" id="IPR017945">
    <property type="entry name" value="DHBP_synth_RibB-like_a/b_dom"/>
</dbReference>
<dbReference type="InterPro" id="IPR000422">
    <property type="entry name" value="DHBP_synthase_RibB"/>
</dbReference>
<dbReference type="NCBIfam" id="TIGR00506">
    <property type="entry name" value="ribB"/>
    <property type="match status" value="1"/>
</dbReference>
<dbReference type="PANTHER" id="PTHR21327:SF38">
    <property type="entry name" value="3,4-DIHYDROXY-2-BUTANONE 4-PHOSPHATE SYNTHASE"/>
    <property type="match status" value="1"/>
</dbReference>
<dbReference type="PANTHER" id="PTHR21327">
    <property type="entry name" value="GTP CYCLOHYDROLASE II-RELATED"/>
    <property type="match status" value="1"/>
</dbReference>
<dbReference type="Pfam" id="PF00926">
    <property type="entry name" value="DHBP_synthase"/>
    <property type="match status" value="1"/>
</dbReference>
<dbReference type="SUPFAM" id="SSF55821">
    <property type="entry name" value="YrdC/RibB"/>
    <property type="match status" value="1"/>
</dbReference>
<accession>B6I413</accession>
<name>RIBB_ECOSE</name>
<evidence type="ECO:0000255" key="1">
    <source>
        <dbReference type="HAMAP-Rule" id="MF_00180"/>
    </source>
</evidence>
<feature type="chain" id="PRO_1000098279" description="3,4-dihydroxy-2-butanone 4-phosphate synthase">
    <location>
        <begin position="1"/>
        <end position="217"/>
    </location>
</feature>
<feature type="binding site" evidence="1">
    <location>
        <begin position="37"/>
        <end position="38"/>
    </location>
    <ligand>
        <name>D-ribulose 5-phosphate</name>
        <dbReference type="ChEBI" id="CHEBI:58121"/>
    </ligand>
</feature>
<feature type="binding site" evidence="1">
    <location>
        <position position="38"/>
    </location>
    <ligand>
        <name>Mg(2+)</name>
        <dbReference type="ChEBI" id="CHEBI:18420"/>
        <label>1</label>
    </ligand>
</feature>
<feature type="binding site" evidence="1">
    <location>
        <position position="38"/>
    </location>
    <ligand>
        <name>Mg(2+)</name>
        <dbReference type="ChEBI" id="CHEBI:18420"/>
        <label>2</label>
    </ligand>
</feature>
<feature type="binding site" evidence="1">
    <location>
        <position position="42"/>
    </location>
    <ligand>
        <name>D-ribulose 5-phosphate</name>
        <dbReference type="ChEBI" id="CHEBI:58121"/>
    </ligand>
</feature>
<feature type="binding site" evidence="1">
    <location>
        <begin position="150"/>
        <end position="154"/>
    </location>
    <ligand>
        <name>D-ribulose 5-phosphate</name>
        <dbReference type="ChEBI" id="CHEBI:58121"/>
    </ligand>
</feature>
<feature type="binding site" evidence="1">
    <location>
        <position position="153"/>
    </location>
    <ligand>
        <name>Mg(2+)</name>
        <dbReference type="ChEBI" id="CHEBI:18420"/>
        <label>2</label>
    </ligand>
</feature>
<feature type="binding site" evidence="1">
    <location>
        <position position="174"/>
    </location>
    <ligand>
        <name>D-ribulose 5-phosphate</name>
        <dbReference type="ChEBI" id="CHEBI:58121"/>
    </ligand>
</feature>
<feature type="site" description="Essential for catalytic activity" evidence="1">
    <location>
        <position position="136"/>
    </location>
</feature>
<feature type="site" description="Essential for catalytic activity" evidence="1">
    <location>
        <position position="174"/>
    </location>
</feature>
<gene>
    <name evidence="1" type="primary">ribB</name>
    <name type="ordered locus">ECSE_3322</name>
</gene>
<protein>
    <recommendedName>
        <fullName evidence="1">3,4-dihydroxy-2-butanone 4-phosphate synthase</fullName>
        <shortName evidence="1">DHBP synthase</shortName>
        <ecNumber evidence="1">4.1.99.12</ecNumber>
    </recommendedName>
</protein>